<dbReference type="EMBL" id="DQ020163">
    <property type="protein sequence ID" value="AAY84826.1"/>
    <property type="molecule type" value="mRNA"/>
</dbReference>
<dbReference type="EMBL" id="AK299154">
    <property type="protein sequence ID" value="BAH12960.1"/>
    <property type="molecule type" value="mRNA"/>
</dbReference>
<dbReference type="EMBL" id="AK313698">
    <property type="protein sequence ID" value="BAG36445.1"/>
    <property type="molecule type" value="mRNA"/>
</dbReference>
<dbReference type="EMBL" id="CH471111">
    <property type="protein sequence ID" value="EAW57965.1"/>
    <property type="molecule type" value="Genomic_DNA"/>
</dbReference>
<dbReference type="EMBL" id="BC000854">
    <property type="protein sequence ID" value="AAH00854.1"/>
    <property type="molecule type" value="mRNA"/>
</dbReference>
<dbReference type="EMBL" id="BC107792">
    <property type="protein sequence ID" value="AAI07793.1"/>
    <property type="molecule type" value="mRNA"/>
</dbReference>
<dbReference type="CCDS" id="CCDS44867.1">
    <molecule id="Q9BVX2-2"/>
</dbReference>
<dbReference type="CCDS" id="CCDS8758.1">
    <molecule id="Q9BVX2-1"/>
</dbReference>
<dbReference type="RefSeq" id="NP_001137313.1">
    <molecule id="Q9BVX2-2"/>
    <property type="nucleotide sequence ID" value="NM_001143841.2"/>
</dbReference>
<dbReference type="RefSeq" id="NP_001137314.1">
    <molecule id="Q9BVX2-1"/>
    <property type="nucleotide sequence ID" value="NM_001143842.2"/>
</dbReference>
<dbReference type="RefSeq" id="NP_001137315.1">
    <molecule id="Q9BVX2-2"/>
    <property type="nucleotide sequence ID" value="NM_001143843.2"/>
</dbReference>
<dbReference type="RefSeq" id="NP_076961.1">
    <molecule id="Q9BVX2-1"/>
    <property type="nucleotide sequence ID" value="NM_024056.4"/>
</dbReference>
<dbReference type="RefSeq" id="XP_024304950.1">
    <molecule id="Q9BVX2-1"/>
    <property type="nucleotide sequence ID" value="XM_024449182.2"/>
</dbReference>
<dbReference type="RefSeq" id="XP_024304951.1">
    <molecule id="Q9BVX2-2"/>
    <property type="nucleotide sequence ID" value="XM_024449183.2"/>
</dbReference>
<dbReference type="RefSeq" id="XP_054229171.1">
    <molecule id="Q9BVX2-2"/>
    <property type="nucleotide sequence ID" value="XM_054373196.1"/>
</dbReference>
<dbReference type="BioGRID" id="122490">
    <property type="interactions" value="89"/>
</dbReference>
<dbReference type="FunCoup" id="Q9BVX2">
    <property type="interactions" value="39"/>
</dbReference>
<dbReference type="IntAct" id="Q9BVX2">
    <property type="interactions" value="70"/>
</dbReference>
<dbReference type="MINT" id="Q9BVX2"/>
<dbReference type="STRING" id="9606.ENSP00000400471"/>
<dbReference type="TCDB" id="9.B.23.1.4">
    <property type="family name" value="the tmem106 (tmem106) family"/>
</dbReference>
<dbReference type="GlyCosmos" id="Q9BVX2">
    <property type="glycosylation" value="2 sites, No reported glycans"/>
</dbReference>
<dbReference type="GlyGen" id="Q9BVX2">
    <property type="glycosylation" value="2 sites, 1 N-linked glycan (1 site)"/>
</dbReference>
<dbReference type="iPTMnet" id="Q9BVX2"/>
<dbReference type="PhosphoSitePlus" id="Q9BVX2"/>
<dbReference type="SwissPalm" id="Q9BVX2"/>
<dbReference type="BioMuta" id="TMEM106C"/>
<dbReference type="DMDM" id="74733372"/>
<dbReference type="jPOST" id="Q9BVX2"/>
<dbReference type="MassIVE" id="Q9BVX2"/>
<dbReference type="PaxDb" id="9606-ENSP00000400471"/>
<dbReference type="PeptideAtlas" id="Q9BVX2"/>
<dbReference type="ProteomicsDB" id="79242">
    <molecule id="Q9BVX2-1"/>
</dbReference>
<dbReference type="ProteomicsDB" id="79243">
    <molecule id="Q9BVX2-2"/>
</dbReference>
<dbReference type="Pumba" id="Q9BVX2"/>
<dbReference type="Antibodypedia" id="25478">
    <property type="antibodies" value="35 antibodies from 17 providers"/>
</dbReference>
<dbReference type="DNASU" id="79022"/>
<dbReference type="Ensembl" id="ENST00000256686.10">
    <molecule id="Q9BVX2-2"/>
    <property type="protein sequence ID" value="ENSP00000256686.6"/>
    <property type="gene ID" value="ENSG00000134291.12"/>
</dbReference>
<dbReference type="Ensembl" id="ENST00000429772.7">
    <molecule id="Q9BVX2-1"/>
    <property type="protein sequence ID" value="ENSP00000400471.2"/>
    <property type="gene ID" value="ENSG00000134291.12"/>
</dbReference>
<dbReference type="Ensembl" id="ENST00000449758.6">
    <molecule id="Q9BVX2-2"/>
    <property type="protein sequence ID" value="ENSP00000402705.2"/>
    <property type="gene ID" value="ENSG00000134291.12"/>
</dbReference>
<dbReference type="Ensembl" id="ENST00000550552.5">
    <molecule id="Q9BVX2-2"/>
    <property type="protein sequence ID" value="ENSP00000449737.1"/>
    <property type="gene ID" value="ENSG00000134291.12"/>
</dbReference>
<dbReference type="Ensembl" id="ENST00000552561.5">
    <molecule id="Q9BVX2-1"/>
    <property type="protein sequence ID" value="ENSP00000446657.1"/>
    <property type="gene ID" value="ENSG00000134291.12"/>
</dbReference>
<dbReference type="GeneID" id="79022"/>
<dbReference type="KEGG" id="hsa:79022"/>
<dbReference type="MANE-Select" id="ENST00000429772.7">
    <property type="protein sequence ID" value="ENSP00000400471.2"/>
    <property type="RefSeq nucleotide sequence ID" value="NM_001143842.2"/>
    <property type="RefSeq protein sequence ID" value="NP_001137314.1"/>
</dbReference>
<dbReference type="UCSC" id="uc001rqo.4">
    <molecule id="Q9BVX2-1"/>
    <property type="organism name" value="human"/>
</dbReference>
<dbReference type="AGR" id="HGNC:28775"/>
<dbReference type="CTD" id="79022"/>
<dbReference type="DisGeNET" id="79022"/>
<dbReference type="GeneCards" id="TMEM106C"/>
<dbReference type="HGNC" id="HGNC:28775">
    <property type="gene designation" value="TMEM106C"/>
</dbReference>
<dbReference type="HPA" id="ENSG00000134291">
    <property type="expression patterns" value="Low tissue specificity"/>
</dbReference>
<dbReference type="neXtProt" id="NX_Q9BVX2"/>
<dbReference type="OpenTargets" id="ENSG00000134291"/>
<dbReference type="PharmGKB" id="PA142670757"/>
<dbReference type="VEuPathDB" id="HostDB:ENSG00000134291"/>
<dbReference type="eggNOG" id="ENOG502QQ43">
    <property type="taxonomic scope" value="Eukaryota"/>
</dbReference>
<dbReference type="GeneTree" id="ENSGT00940000161281"/>
<dbReference type="HOGENOM" id="CLU_089337_0_0_1"/>
<dbReference type="InParanoid" id="Q9BVX2"/>
<dbReference type="OMA" id="PYVYAFC"/>
<dbReference type="OrthoDB" id="508875at2759"/>
<dbReference type="PAN-GO" id="Q9BVX2">
    <property type="GO annotations" value="0 GO annotations based on evolutionary models"/>
</dbReference>
<dbReference type="PhylomeDB" id="Q9BVX2"/>
<dbReference type="TreeFam" id="TF328907"/>
<dbReference type="PathwayCommons" id="Q9BVX2"/>
<dbReference type="SignaLink" id="Q9BVX2"/>
<dbReference type="BioGRID-ORCS" id="79022">
    <property type="hits" value="11 hits in 1161 CRISPR screens"/>
</dbReference>
<dbReference type="ChiTaRS" id="TMEM106C">
    <property type="organism name" value="human"/>
</dbReference>
<dbReference type="GenomeRNAi" id="79022"/>
<dbReference type="Pharos" id="Q9BVX2">
    <property type="development level" value="Tdark"/>
</dbReference>
<dbReference type="PRO" id="PR:Q9BVX2"/>
<dbReference type="Proteomes" id="UP000005640">
    <property type="component" value="Chromosome 12"/>
</dbReference>
<dbReference type="RNAct" id="Q9BVX2">
    <property type="molecule type" value="protein"/>
</dbReference>
<dbReference type="Bgee" id="ENSG00000134291">
    <property type="expression patterns" value="Expressed in rectum and 190 other cell types or tissues"/>
</dbReference>
<dbReference type="ExpressionAtlas" id="Q9BVX2">
    <property type="expression patterns" value="baseline and differential"/>
</dbReference>
<dbReference type="GO" id="GO:0005789">
    <property type="term" value="C:endoplasmic reticulum membrane"/>
    <property type="evidence" value="ECO:0007669"/>
    <property type="project" value="UniProtKB-SubCell"/>
</dbReference>
<dbReference type="InterPro" id="IPR009790">
    <property type="entry name" value="TMEM106"/>
</dbReference>
<dbReference type="InterPro" id="IPR048509">
    <property type="entry name" value="TMEM106_C"/>
</dbReference>
<dbReference type="InterPro" id="IPR048511">
    <property type="entry name" value="TMEM106_N"/>
</dbReference>
<dbReference type="PANTHER" id="PTHR28556">
    <property type="entry name" value="TRANSMEMBRANE PROTEIN 106B"/>
    <property type="match status" value="1"/>
</dbReference>
<dbReference type="PANTHER" id="PTHR28556:SF5">
    <property type="entry name" value="TRANSMEMBRANE PROTEIN 106C"/>
    <property type="match status" value="1"/>
</dbReference>
<dbReference type="Pfam" id="PF07092">
    <property type="entry name" value="TMEM106"/>
    <property type="match status" value="1"/>
</dbReference>
<dbReference type="Pfam" id="PF21002">
    <property type="entry name" value="TMEM106_N"/>
    <property type="match status" value="1"/>
</dbReference>
<organism>
    <name type="scientific">Homo sapiens</name>
    <name type="common">Human</name>
    <dbReference type="NCBI Taxonomy" id="9606"/>
    <lineage>
        <taxon>Eukaryota</taxon>
        <taxon>Metazoa</taxon>
        <taxon>Chordata</taxon>
        <taxon>Craniata</taxon>
        <taxon>Vertebrata</taxon>
        <taxon>Euteleostomi</taxon>
        <taxon>Mammalia</taxon>
        <taxon>Eutheria</taxon>
        <taxon>Euarchontoglires</taxon>
        <taxon>Primates</taxon>
        <taxon>Haplorrhini</taxon>
        <taxon>Catarrhini</taxon>
        <taxon>Hominidae</taxon>
        <taxon>Homo</taxon>
    </lineage>
</organism>
<evidence type="ECO:0000255" key="1"/>
<evidence type="ECO:0000256" key="2">
    <source>
        <dbReference type="SAM" id="MobiDB-lite"/>
    </source>
</evidence>
<evidence type="ECO:0000269" key="3">
    <source>
    </source>
</evidence>
<evidence type="ECO:0000269" key="4">
    <source>
    </source>
</evidence>
<evidence type="ECO:0000269" key="5">
    <source>
    </source>
</evidence>
<evidence type="ECO:0000269" key="6">
    <source ref="1"/>
</evidence>
<evidence type="ECO:0000303" key="7">
    <source>
    </source>
</evidence>
<evidence type="ECO:0000303" key="8">
    <source>
    </source>
</evidence>
<evidence type="ECO:0000305" key="9"/>
<accession>Q9BVX2</accession>
<accession>B2R998</accession>
<accession>B7Z5M4</accession>
<accession>Q3B761</accession>
<name>T106C_HUMAN</name>
<proteinExistence type="evidence at protein level"/>
<reference key="1">
    <citation type="submission" date="2005-04" db="EMBL/GenBank/DDBJ databases">
        <title>EMOC, a novel stress-regulated gene, encodes an endoplasmic reticulum transmembrane protein and is overexpressed in multiple human malignancies.</title>
        <authorList>
            <person name="Jin W."/>
            <person name="Sun Q."/>
            <person name="Rong R."/>
            <person name="He Q."/>
            <person name="Sheikh M.S."/>
            <person name="Huang Y."/>
        </authorList>
    </citation>
    <scope>NUCLEOTIDE SEQUENCE [MRNA] (ISOFORM 1)</scope>
    <scope>SUBCELLULAR LOCATION</scope>
</reference>
<reference key="2">
    <citation type="journal article" date="2004" name="Nat. Genet.">
        <title>Complete sequencing and characterization of 21,243 full-length human cDNAs.</title>
        <authorList>
            <person name="Ota T."/>
            <person name="Suzuki Y."/>
            <person name="Nishikawa T."/>
            <person name="Otsuki T."/>
            <person name="Sugiyama T."/>
            <person name="Irie R."/>
            <person name="Wakamatsu A."/>
            <person name="Hayashi K."/>
            <person name="Sato H."/>
            <person name="Nagai K."/>
            <person name="Kimura K."/>
            <person name="Makita H."/>
            <person name="Sekine M."/>
            <person name="Obayashi M."/>
            <person name="Nishi T."/>
            <person name="Shibahara T."/>
            <person name="Tanaka T."/>
            <person name="Ishii S."/>
            <person name="Yamamoto J."/>
            <person name="Saito K."/>
            <person name="Kawai Y."/>
            <person name="Isono Y."/>
            <person name="Nakamura Y."/>
            <person name="Nagahari K."/>
            <person name="Murakami K."/>
            <person name="Yasuda T."/>
            <person name="Iwayanagi T."/>
            <person name="Wagatsuma M."/>
            <person name="Shiratori A."/>
            <person name="Sudo H."/>
            <person name="Hosoiri T."/>
            <person name="Kaku Y."/>
            <person name="Kodaira H."/>
            <person name="Kondo H."/>
            <person name="Sugawara M."/>
            <person name="Takahashi M."/>
            <person name="Kanda K."/>
            <person name="Yokoi T."/>
            <person name="Furuya T."/>
            <person name="Kikkawa E."/>
            <person name="Omura Y."/>
            <person name="Abe K."/>
            <person name="Kamihara K."/>
            <person name="Katsuta N."/>
            <person name="Sato K."/>
            <person name="Tanikawa M."/>
            <person name="Yamazaki M."/>
            <person name="Ninomiya K."/>
            <person name="Ishibashi T."/>
            <person name="Yamashita H."/>
            <person name="Murakawa K."/>
            <person name="Fujimori K."/>
            <person name="Tanai H."/>
            <person name="Kimata M."/>
            <person name="Watanabe M."/>
            <person name="Hiraoka S."/>
            <person name="Chiba Y."/>
            <person name="Ishida S."/>
            <person name="Ono Y."/>
            <person name="Takiguchi S."/>
            <person name="Watanabe S."/>
            <person name="Yosida M."/>
            <person name="Hotuta T."/>
            <person name="Kusano J."/>
            <person name="Kanehori K."/>
            <person name="Takahashi-Fujii A."/>
            <person name="Hara H."/>
            <person name="Tanase T.-O."/>
            <person name="Nomura Y."/>
            <person name="Togiya S."/>
            <person name="Komai F."/>
            <person name="Hara R."/>
            <person name="Takeuchi K."/>
            <person name="Arita M."/>
            <person name="Imose N."/>
            <person name="Musashino K."/>
            <person name="Yuuki H."/>
            <person name="Oshima A."/>
            <person name="Sasaki N."/>
            <person name="Aotsuka S."/>
            <person name="Yoshikawa Y."/>
            <person name="Matsunawa H."/>
            <person name="Ichihara T."/>
            <person name="Shiohata N."/>
            <person name="Sano S."/>
            <person name="Moriya S."/>
            <person name="Momiyama H."/>
            <person name="Satoh N."/>
            <person name="Takami S."/>
            <person name="Terashima Y."/>
            <person name="Suzuki O."/>
            <person name="Nakagawa S."/>
            <person name="Senoh A."/>
            <person name="Mizoguchi H."/>
            <person name="Goto Y."/>
            <person name="Shimizu F."/>
            <person name="Wakebe H."/>
            <person name="Hishigaki H."/>
            <person name="Watanabe T."/>
            <person name="Sugiyama A."/>
            <person name="Takemoto M."/>
            <person name="Kawakami B."/>
            <person name="Yamazaki M."/>
            <person name="Watanabe K."/>
            <person name="Kumagai A."/>
            <person name="Itakura S."/>
            <person name="Fukuzumi Y."/>
            <person name="Fujimori Y."/>
            <person name="Komiyama M."/>
            <person name="Tashiro H."/>
            <person name="Tanigami A."/>
            <person name="Fujiwara T."/>
            <person name="Ono T."/>
            <person name="Yamada K."/>
            <person name="Fujii Y."/>
            <person name="Ozaki K."/>
            <person name="Hirao M."/>
            <person name="Ohmori Y."/>
            <person name="Kawabata A."/>
            <person name="Hikiji T."/>
            <person name="Kobatake N."/>
            <person name="Inagaki H."/>
            <person name="Ikema Y."/>
            <person name="Okamoto S."/>
            <person name="Okitani R."/>
            <person name="Kawakami T."/>
            <person name="Noguchi S."/>
            <person name="Itoh T."/>
            <person name="Shigeta K."/>
            <person name="Senba T."/>
            <person name="Matsumura K."/>
            <person name="Nakajima Y."/>
            <person name="Mizuno T."/>
            <person name="Morinaga M."/>
            <person name="Sasaki M."/>
            <person name="Togashi T."/>
            <person name="Oyama M."/>
            <person name="Hata H."/>
            <person name="Watanabe M."/>
            <person name="Komatsu T."/>
            <person name="Mizushima-Sugano J."/>
            <person name="Satoh T."/>
            <person name="Shirai Y."/>
            <person name="Takahashi Y."/>
            <person name="Nakagawa K."/>
            <person name="Okumura K."/>
            <person name="Nagase T."/>
            <person name="Nomura N."/>
            <person name="Kikuchi H."/>
            <person name="Masuho Y."/>
            <person name="Yamashita R."/>
            <person name="Nakai K."/>
            <person name="Yada T."/>
            <person name="Nakamura Y."/>
            <person name="Ohara O."/>
            <person name="Isogai T."/>
            <person name="Sugano S."/>
        </authorList>
    </citation>
    <scope>NUCLEOTIDE SEQUENCE [LARGE SCALE MRNA] (ISOFORMS 1 AND 2)</scope>
</reference>
<reference key="3">
    <citation type="submission" date="2005-07" db="EMBL/GenBank/DDBJ databases">
        <authorList>
            <person name="Mural R.J."/>
            <person name="Istrail S."/>
            <person name="Sutton G.G."/>
            <person name="Florea L."/>
            <person name="Halpern A.L."/>
            <person name="Mobarry C.M."/>
            <person name="Lippert R."/>
            <person name="Walenz B."/>
            <person name="Shatkay H."/>
            <person name="Dew I."/>
            <person name="Miller J.R."/>
            <person name="Flanigan M.J."/>
            <person name="Edwards N.J."/>
            <person name="Bolanos R."/>
            <person name="Fasulo D."/>
            <person name="Halldorsson B.V."/>
            <person name="Hannenhalli S."/>
            <person name="Turner R."/>
            <person name="Yooseph S."/>
            <person name="Lu F."/>
            <person name="Nusskern D.R."/>
            <person name="Shue B.C."/>
            <person name="Zheng X.H."/>
            <person name="Zhong F."/>
            <person name="Delcher A.L."/>
            <person name="Huson D.H."/>
            <person name="Kravitz S.A."/>
            <person name="Mouchard L."/>
            <person name="Reinert K."/>
            <person name="Remington K.A."/>
            <person name="Clark A.G."/>
            <person name="Waterman M.S."/>
            <person name="Eichler E.E."/>
            <person name="Adams M.D."/>
            <person name="Hunkapiller M.W."/>
            <person name="Myers E.W."/>
            <person name="Venter J.C."/>
        </authorList>
    </citation>
    <scope>NUCLEOTIDE SEQUENCE [LARGE SCALE GENOMIC DNA]</scope>
</reference>
<reference key="4">
    <citation type="journal article" date="2004" name="Genome Res.">
        <title>The status, quality, and expansion of the NIH full-length cDNA project: the Mammalian Gene Collection (MGC).</title>
        <authorList>
            <consortium name="The MGC Project Team"/>
        </authorList>
    </citation>
    <scope>NUCLEOTIDE SEQUENCE [LARGE SCALE MRNA] (ISOFORMS 1 AND 2)</scope>
    <scope>VARIANT PHE-103</scope>
    <source>
        <tissue>Cervix</tissue>
        <tissue>Skin</tissue>
    </source>
</reference>
<reference key="5">
    <citation type="journal article" date="2014" name="Mol. Cell. Neurosci.">
        <title>Lysosome size, motility and stress response regulated by fronto-temporal dementia modifier TMEM106B.</title>
        <authorList>
            <person name="Stagi M."/>
            <person name="Klein Z.A."/>
            <person name="Gould T.J."/>
            <person name="Bewersdorf J."/>
            <person name="Strittmatter S.M."/>
        </authorList>
    </citation>
    <scope>INTERACTION WITH TMEM106B</scope>
</reference>
<reference key="6">
    <citation type="journal article" date="2015" name="Angew. Chem. Int. Ed.">
        <title>Multifunctional reagents for quantitative proteome-wide analysis of protein modification in human cells and dynamic profiling of protein lipidation during vertebrate development.</title>
        <authorList>
            <person name="Broncel M."/>
            <person name="Serwa R.A."/>
            <person name="Ciepla P."/>
            <person name="Krause E."/>
            <person name="Dallman M.J."/>
            <person name="Magee A.I."/>
            <person name="Tate E.W."/>
        </authorList>
    </citation>
    <scope>MYRISTOYLATION AT GLY-2</scope>
    <scope>CLEAVAGE OF INITIATOR METHIONINE</scope>
    <scope>IDENTIFICATION BY MASS SPECTROMETRY</scope>
</reference>
<gene>
    <name type="primary">TMEM106C</name>
    <name type="synonym">EMOC</name>
</gene>
<feature type="initiator methionine" description="Removed" evidence="5">
    <location>
        <position position="1"/>
    </location>
</feature>
<feature type="chain" id="PRO_0000243900" description="Transmembrane protein 106C">
    <location>
        <begin position="2"/>
        <end position="250"/>
    </location>
</feature>
<feature type="transmembrane region" description="Helical" evidence="1">
    <location>
        <begin position="87"/>
        <end position="107"/>
    </location>
</feature>
<feature type="transmembrane region" description="Helical" evidence="1">
    <location>
        <begin position="197"/>
        <end position="217"/>
    </location>
</feature>
<feature type="region of interest" description="Disordered" evidence="2">
    <location>
        <begin position="1"/>
        <end position="25"/>
    </location>
</feature>
<feature type="compositionally biased region" description="Basic and acidic residues" evidence="2">
    <location>
        <begin position="16"/>
        <end position="25"/>
    </location>
</feature>
<feature type="lipid moiety-binding region" description="N-myristoyl glycine" evidence="5">
    <location>
        <position position="2"/>
    </location>
</feature>
<feature type="glycosylation site" description="N-linked (GlcNAc...) asparagine" evidence="1">
    <location>
        <position position="173"/>
    </location>
</feature>
<feature type="glycosylation site" description="N-linked (GlcNAc...) asparagine" evidence="1">
    <location>
        <position position="186"/>
    </location>
</feature>
<feature type="splice variant" id="VSP_019483" description="In isoform 2." evidence="7 8">
    <location>
        <begin position="166"/>
        <end position="184"/>
    </location>
</feature>
<feature type="sequence variant" id="VAR_052338" description="In dbSNP:rs35000511." evidence="3">
    <original>V</original>
    <variation>F</variation>
    <location>
        <position position="103"/>
    </location>
</feature>
<feature type="sequence variant" id="VAR_026868" description="In dbSNP:rs2286025.">
    <original>S</original>
    <variation>F</variation>
    <location>
        <position position="175"/>
    </location>
</feature>
<sequence>MGSQHSAAARPSSCRRKQEDDRDGLLAEREQEEAIAQFPYVEFTGRDSITCLTCQGTGYIPTEQVNELVALIPHSDQRLRPQRTKQYVLLSILLCLLASGLVVFFLFPHSVLVDDDGIKVVKVTFNKQDSLVILTIMATLKIRNSNFYTVAVTSLSSQIQYMNTVVSTYVTTNVSLIPPRSEQLVNFTGKAEMGGPFSYVYFFCTVPEILVHNIVIFMRTSVKISYIGLMTQSSLETHHYVDCGGNSTAI</sequence>
<protein>
    <recommendedName>
        <fullName>Transmembrane protein 106C</fullName>
    </recommendedName>
    <alternativeName>
        <fullName>Endoplasmic reticulum membrane protein overexpressed in cancer</fullName>
    </alternativeName>
</protein>
<comment type="subunit">
    <text evidence="4">Interacts with TMEM106B.</text>
</comment>
<comment type="interaction">
    <interactant intactId="EBI-2821497">
        <id>Q9BVX2</id>
    </interactant>
    <interactant intactId="EBI-10225815">
        <id>Q08AM2</id>
        <label>ADAM33</label>
    </interactant>
    <organismsDiffer>false</organismsDiffer>
    <experiments>3</experiments>
</comment>
<comment type="interaction">
    <interactant intactId="EBI-2821497">
        <id>Q9BVX2</id>
    </interactant>
    <interactant intactId="EBI-11957045">
        <id>Q9NVV5-2</id>
        <label>AIG1</label>
    </interactant>
    <organismsDiffer>false</organismsDiffer>
    <experiments>3</experiments>
</comment>
<comment type="interaction">
    <interactant intactId="EBI-2821497">
        <id>Q9BVX2</id>
    </interactant>
    <interactant intactId="EBI-749464">
        <id>Q12983</id>
        <label>BNIP3</label>
    </interactant>
    <organismsDiffer>false</organismsDiffer>
    <experiments>3</experiments>
</comment>
<comment type="interaction">
    <interactant intactId="EBI-2821497">
        <id>Q9BVX2</id>
    </interactant>
    <interactant intactId="EBI-12256978">
        <id>Q8N6F1-2</id>
        <label>CLDN19</label>
    </interactant>
    <organismsDiffer>false</organismsDiffer>
    <experiments>3</experiments>
</comment>
<comment type="interaction">
    <interactant intactId="EBI-2821497">
        <id>Q9BVX2</id>
    </interactant>
    <interactant intactId="EBI-2807956">
        <id>Q96FZ5</id>
        <label>CMTM7</label>
    </interactant>
    <organismsDiffer>false</organismsDiffer>
    <experiments>3</experiments>
</comment>
<comment type="interaction">
    <interactant intactId="EBI-2821497">
        <id>Q9BVX2</id>
    </interactant>
    <interactant intactId="EBI-12019274">
        <id>Q4LDR2</id>
        <label>CTXN3</label>
    </interactant>
    <organismsDiffer>false</organismsDiffer>
    <experiments>3</experiments>
</comment>
<comment type="interaction">
    <interactant intactId="EBI-2821497">
        <id>Q9BVX2</id>
    </interactant>
    <interactant intactId="EBI-3911467">
        <id>Q07325</id>
        <label>CXCL9</label>
    </interactant>
    <organismsDiffer>false</organismsDiffer>
    <experiments>3</experiments>
</comment>
<comment type="interaction">
    <interactant intactId="EBI-2821497">
        <id>Q9BVX2</id>
    </interactant>
    <interactant intactId="EBI-10215665">
        <id>P56851</id>
        <label>EDDM3B</label>
    </interactant>
    <organismsDiffer>false</organismsDiffer>
    <experiments>3</experiments>
</comment>
<comment type="interaction">
    <interactant intactId="EBI-2821497">
        <id>Q9BVX2</id>
    </interactant>
    <interactant intactId="EBI-12142299">
        <id>Q96IV6</id>
        <label>FAXDC2</label>
    </interactant>
    <organismsDiffer>false</organismsDiffer>
    <experiments>3</experiments>
</comment>
<comment type="interaction">
    <interactant intactId="EBI-2821497">
        <id>Q9BVX2</id>
    </interactant>
    <interactant intactId="EBI-4401517">
        <id>O14653</id>
        <label>GOSR2</label>
    </interactant>
    <organismsDiffer>false</organismsDiffer>
    <experiments>3</experiments>
</comment>
<comment type="interaction">
    <interactant intactId="EBI-2821497">
        <id>Q9BVX2</id>
    </interactant>
    <interactant intactId="EBI-12051643">
        <id>B0YJ81</id>
        <label>HACD1</label>
    </interactant>
    <organismsDiffer>false</organismsDiffer>
    <experiments>4</experiments>
</comment>
<comment type="interaction">
    <interactant intactId="EBI-2821497">
        <id>Q9BVX2</id>
    </interactant>
    <interactant intactId="EBI-720480">
        <id>P24593</id>
        <label>IGFBP5</label>
    </interactant>
    <organismsDiffer>false</organismsDiffer>
    <experiments>3</experiments>
</comment>
<comment type="interaction">
    <interactant intactId="EBI-2821497">
        <id>Q9BVX2</id>
    </interactant>
    <interactant intactId="EBI-10266796">
        <id>Q8N5M9</id>
        <label>JAGN1</label>
    </interactant>
    <organismsDiffer>false</organismsDiffer>
    <experiments>3</experiments>
</comment>
<comment type="interaction">
    <interactant intactId="EBI-2821497">
        <id>Q9BVX2</id>
    </interactant>
    <interactant intactId="EBI-948001">
        <id>Q15323</id>
        <label>KRT31</label>
    </interactant>
    <organismsDiffer>false</organismsDiffer>
    <experiments>6</experiments>
</comment>
<comment type="interaction">
    <interactant intactId="EBI-2821497">
        <id>Q9BVX2</id>
    </interactant>
    <interactant intactId="EBI-3932027">
        <id>P21145</id>
        <label>MAL</label>
    </interactant>
    <organismsDiffer>false</organismsDiffer>
    <experiments>3</experiments>
</comment>
<comment type="interaction">
    <interactant intactId="EBI-2821497">
        <id>Q9BVX2</id>
    </interactant>
    <interactant intactId="EBI-10317612">
        <id>Q9P0N8</id>
        <label>MARCHF2</label>
    </interactant>
    <organismsDiffer>false</organismsDiffer>
    <experiments>3</experiments>
</comment>
<comment type="interaction">
    <interactant intactId="EBI-2821497">
        <id>Q9BVX2</id>
    </interactant>
    <interactant intactId="EBI-13301517">
        <id>Q96S97</id>
        <label>MYADM</label>
    </interactant>
    <organismsDiffer>false</organismsDiffer>
    <experiments>3</experiments>
</comment>
<comment type="interaction">
    <interactant intactId="EBI-2821497">
        <id>Q9BVX2</id>
    </interactant>
    <interactant intactId="EBI-3919611">
        <id>Q16617</id>
        <label>NKG7</label>
    </interactant>
    <organismsDiffer>false</organismsDiffer>
    <experiments>3</experiments>
</comment>
<comment type="interaction">
    <interactant intactId="EBI-2821497">
        <id>Q9BVX2</id>
    </interactant>
    <interactant intactId="EBI-12051377">
        <id>Q8N912</id>
        <label>NRAC</label>
    </interactant>
    <organismsDiffer>false</organismsDiffer>
    <experiments>3</experiments>
</comment>
<comment type="interaction">
    <interactant intactId="EBI-2821497">
        <id>Q9BVX2</id>
    </interactant>
    <interactant intactId="EBI-10264528">
        <id>Q8IZ57</id>
        <label>NRSN1</label>
    </interactant>
    <organismsDiffer>false</organismsDiffer>
    <experiments>3</experiments>
</comment>
<comment type="interaction">
    <interactant intactId="EBI-2821497">
        <id>Q9BVX2</id>
    </interactant>
    <interactant intactId="EBI-12957629">
        <id>P0DJD7</id>
        <label>PGA4</label>
    </interactant>
    <organismsDiffer>false</organismsDiffer>
    <experiments>3</experiments>
</comment>
<comment type="interaction">
    <interactant intactId="EBI-2821497">
        <id>Q9BVX2</id>
    </interactant>
    <interactant intactId="EBI-692836">
        <id>P26678</id>
        <label>PLN</label>
    </interactant>
    <organismsDiffer>false</organismsDiffer>
    <experiments>3</experiments>
</comment>
<comment type="interaction">
    <interactant intactId="EBI-2821497">
        <id>Q9BVX2</id>
    </interactant>
    <interactant intactId="EBI-12188331">
        <id>P60201-2</id>
        <label>PLP1</label>
    </interactant>
    <organismsDiffer>false</organismsDiffer>
    <experiments>3</experiments>
</comment>
<comment type="interaction">
    <interactant intactId="EBI-2821497">
        <id>Q9BVX2</id>
    </interactant>
    <interactant intactId="EBI-11721828">
        <id>Q8IY26</id>
        <label>PLPP6</label>
    </interactant>
    <organismsDiffer>false</organismsDiffer>
    <experiments>3</experiments>
</comment>
<comment type="interaction">
    <interactant intactId="EBI-2821497">
        <id>Q9BVX2</id>
    </interactant>
    <interactant intactId="EBI-3906138">
        <id>P53801</id>
        <label>PTTG1IP</label>
    </interactant>
    <organismsDiffer>false</organismsDiffer>
    <experiments>3</experiments>
</comment>
<comment type="interaction">
    <interactant intactId="EBI-2821497">
        <id>Q9BVX2</id>
    </interactant>
    <interactant intactId="EBI-1052363">
        <id>Q9NS64</id>
        <label>RPRM</label>
    </interactant>
    <organismsDiffer>false</organismsDiffer>
    <experiments>3</experiments>
</comment>
<comment type="interaction">
    <interactant intactId="EBI-2821497">
        <id>Q9BVX2</id>
    </interactant>
    <interactant intactId="EBI-8652744">
        <id>Q96IW7</id>
        <label>SEC22A</label>
    </interactant>
    <organismsDiffer>false</organismsDiffer>
    <experiments>3</experiments>
</comment>
<comment type="interaction">
    <interactant intactId="EBI-2821497">
        <id>Q9BVX2</id>
    </interactant>
    <interactant intactId="EBI-749270">
        <id>Q8N6R1</id>
        <label>SERP2</label>
    </interactant>
    <organismsDiffer>false</organismsDiffer>
    <experiments>3</experiments>
</comment>
<comment type="interaction">
    <interactant intactId="EBI-2821497">
        <id>Q9BVX2</id>
    </interactant>
    <interactant intactId="EBI-10197617">
        <id>P11686</id>
        <label>SFTPC</label>
    </interactant>
    <organismsDiffer>false</organismsDiffer>
    <experiments>3</experiments>
</comment>
<comment type="interaction">
    <interactant intactId="EBI-2821497">
        <id>Q9BVX2</id>
    </interactant>
    <interactant intactId="EBI-10226799">
        <id>Q0VAQ4</id>
        <label>SMAGP</label>
    </interactant>
    <organismsDiffer>false</organismsDiffer>
    <experiments>3</experiments>
</comment>
<comment type="interaction">
    <interactant intactId="EBI-2821497">
        <id>Q9BVX2</id>
    </interactant>
    <interactant intactId="EBI-3915978">
        <id>Q96A25</id>
        <label>TMEM106A</label>
    </interactant>
    <organismsDiffer>false</organismsDiffer>
    <experiments>5</experiments>
</comment>
<comment type="interaction">
    <interactant intactId="EBI-2821497">
        <id>Q9BVX2</id>
    </interactant>
    <interactant intactId="EBI-10490807">
        <id>Q9NUM4</id>
        <label>TMEM106B</label>
    </interactant>
    <organismsDiffer>false</organismsDiffer>
    <experiments>4</experiments>
</comment>
<comment type="interaction">
    <interactant intactId="EBI-2821497">
        <id>Q9BVX2</id>
    </interactant>
    <interactant intactId="EBI-723946">
        <id>P17152</id>
        <label>TMEM11</label>
    </interactant>
    <organismsDiffer>false</organismsDiffer>
    <experiments>3</experiments>
</comment>
<comment type="interaction">
    <interactant intactId="EBI-2821497">
        <id>Q9BVX2</id>
    </interactant>
    <interactant intactId="EBI-10173151">
        <id>A2RU14</id>
        <label>TMEM218</label>
    </interactant>
    <organismsDiffer>false</organismsDiffer>
    <experiments>3</experiments>
</comment>
<comment type="interaction">
    <interactant intactId="EBI-2821497">
        <id>Q9BVX2</id>
    </interactant>
    <interactant intactId="EBI-11722971">
        <id>Q53FP2</id>
        <label>TMEM35A</label>
    </interactant>
    <organismsDiffer>false</organismsDiffer>
    <experiments>3</experiments>
</comment>
<comment type="interaction">
    <interactant intactId="EBI-2821497">
        <id>Q9BVX2</id>
    </interactant>
    <interactant intactId="EBI-12111910">
        <id>Q5BJF2</id>
        <label>TMEM97</label>
    </interactant>
    <organismsDiffer>false</organismsDiffer>
    <experiments>3</experiments>
</comment>
<comment type="interaction">
    <interactant intactId="EBI-2821497">
        <id>Q9BVX2</id>
    </interactant>
    <interactant intactId="EBI-12045841">
        <id>Q86UF1</id>
        <label>TSPAN33</label>
    </interactant>
    <organismsDiffer>false</organismsDiffer>
    <experiments>4</experiments>
</comment>
<comment type="interaction">
    <interactant intactId="EBI-2821497">
        <id>Q9BVX2</id>
    </interactant>
    <interactant intactId="EBI-10179682">
        <id>O00526</id>
        <label>UPK2</label>
    </interactant>
    <organismsDiffer>false</organismsDiffer>
    <experiments>3</experiments>
</comment>
<comment type="interaction">
    <interactant intactId="EBI-2821497">
        <id>Q9BVX2</id>
    </interactant>
    <interactant intactId="EBI-10191195">
        <id>O95183</id>
        <label>VAMP5</label>
    </interactant>
    <organismsDiffer>false</organismsDiffer>
    <experiments>3</experiments>
</comment>
<comment type="interaction">
    <interactant intactId="EBI-2821497">
        <id>Q9BVX2</id>
    </interactant>
    <interactant intactId="EBI-751210">
        <id>Q96EC8</id>
        <label>YIPF6</label>
    </interactant>
    <organismsDiffer>false</organismsDiffer>
    <experiments>3</experiments>
</comment>
<comment type="interaction">
    <interactant intactId="EBI-2821497">
        <id>Q9BVX2</id>
    </interactant>
    <interactant intactId="EBI-718439">
        <id>O95159</id>
        <label>ZFPL1</label>
    </interactant>
    <organismsDiffer>false</organismsDiffer>
    <experiments>3</experiments>
</comment>
<comment type="subcellular location">
    <subcellularLocation>
        <location evidence="6">Endoplasmic reticulum membrane</location>
        <topology evidence="6">Multi-pass membrane protein</topology>
    </subcellularLocation>
    <subcellularLocation>
        <location evidence="9">Membrane</location>
        <topology evidence="9">Lipid-anchor</topology>
    </subcellularLocation>
</comment>
<comment type="alternative products">
    <event type="alternative splicing"/>
    <isoform>
        <id>Q9BVX2-1</id>
        <name>1</name>
        <sequence type="displayed"/>
    </isoform>
    <isoform>
        <id>Q9BVX2-2</id>
        <name>2</name>
        <sequence type="described" ref="VSP_019483"/>
    </isoform>
</comment>
<comment type="similarity">
    <text evidence="9">Belongs to the TMEM106 family.</text>
</comment>
<keyword id="KW-0025">Alternative splicing</keyword>
<keyword id="KW-0256">Endoplasmic reticulum</keyword>
<keyword id="KW-0325">Glycoprotein</keyword>
<keyword id="KW-0449">Lipoprotein</keyword>
<keyword id="KW-0472">Membrane</keyword>
<keyword id="KW-0519">Myristate</keyword>
<keyword id="KW-1267">Proteomics identification</keyword>
<keyword id="KW-1185">Reference proteome</keyword>
<keyword id="KW-0812">Transmembrane</keyword>
<keyword id="KW-1133">Transmembrane helix</keyword>